<feature type="chain" id="PRO_0000352471" description="Uncharacterized protein DDB_G0280315">
    <location>
        <begin position="1"/>
        <end position="324"/>
    </location>
</feature>
<feature type="region of interest" description="Disordered" evidence="1">
    <location>
        <begin position="1"/>
        <end position="77"/>
    </location>
</feature>
<feature type="region of interest" description="Disordered" evidence="1">
    <location>
        <begin position="132"/>
        <end position="194"/>
    </location>
</feature>
<feature type="region of interest" description="Disordered" evidence="1">
    <location>
        <begin position="272"/>
        <end position="324"/>
    </location>
</feature>
<feature type="compositionally biased region" description="Polar residues" evidence="1">
    <location>
        <begin position="1"/>
        <end position="11"/>
    </location>
</feature>
<feature type="compositionally biased region" description="Low complexity" evidence="1">
    <location>
        <begin position="21"/>
        <end position="64"/>
    </location>
</feature>
<feature type="compositionally biased region" description="Low complexity" evidence="1">
    <location>
        <begin position="279"/>
        <end position="324"/>
    </location>
</feature>
<name>Y6510_DICDI</name>
<gene>
    <name type="ORF">DDB_G0280315</name>
</gene>
<keyword id="KW-1185">Reference proteome</keyword>
<organism>
    <name type="scientific">Dictyostelium discoideum</name>
    <name type="common">Social amoeba</name>
    <dbReference type="NCBI Taxonomy" id="44689"/>
    <lineage>
        <taxon>Eukaryota</taxon>
        <taxon>Amoebozoa</taxon>
        <taxon>Evosea</taxon>
        <taxon>Eumycetozoa</taxon>
        <taxon>Dictyostelia</taxon>
        <taxon>Dictyosteliales</taxon>
        <taxon>Dictyosteliaceae</taxon>
        <taxon>Dictyostelium</taxon>
    </lineage>
</organism>
<evidence type="ECO:0000256" key="1">
    <source>
        <dbReference type="SAM" id="MobiDB-lite"/>
    </source>
</evidence>
<reference key="1">
    <citation type="journal article" date="2005" name="Nature">
        <title>The genome of the social amoeba Dictyostelium discoideum.</title>
        <authorList>
            <person name="Eichinger L."/>
            <person name="Pachebat J.A."/>
            <person name="Gloeckner G."/>
            <person name="Rajandream M.A."/>
            <person name="Sucgang R."/>
            <person name="Berriman M."/>
            <person name="Song J."/>
            <person name="Olsen R."/>
            <person name="Szafranski K."/>
            <person name="Xu Q."/>
            <person name="Tunggal B."/>
            <person name="Kummerfeld S."/>
            <person name="Madera M."/>
            <person name="Konfortov B.A."/>
            <person name="Rivero F."/>
            <person name="Bankier A.T."/>
            <person name="Lehmann R."/>
            <person name="Hamlin N."/>
            <person name="Davies R."/>
            <person name="Gaudet P."/>
            <person name="Fey P."/>
            <person name="Pilcher K."/>
            <person name="Chen G."/>
            <person name="Saunders D."/>
            <person name="Sodergren E.J."/>
            <person name="Davis P."/>
            <person name="Kerhornou A."/>
            <person name="Nie X."/>
            <person name="Hall N."/>
            <person name="Anjard C."/>
            <person name="Hemphill L."/>
            <person name="Bason N."/>
            <person name="Farbrother P."/>
            <person name="Desany B."/>
            <person name="Just E."/>
            <person name="Morio T."/>
            <person name="Rost R."/>
            <person name="Churcher C.M."/>
            <person name="Cooper J."/>
            <person name="Haydock S."/>
            <person name="van Driessche N."/>
            <person name="Cronin A."/>
            <person name="Goodhead I."/>
            <person name="Muzny D.M."/>
            <person name="Mourier T."/>
            <person name="Pain A."/>
            <person name="Lu M."/>
            <person name="Harper D."/>
            <person name="Lindsay R."/>
            <person name="Hauser H."/>
            <person name="James K.D."/>
            <person name="Quiles M."/>
            <person name="Madan Babu M."/>
            <person name="Saito T."/>
            <person name="Buchrieser C."/>
            <person name="Wardroper A."/>
            <person name="Felder M."/>
            <person name="Thangavelu M."/>
            <person name="Johnson D."/>
            <person name="Knights A."/>
            <person name="Loulseged H."/>
            <person name="Mungall K.L."/>
            <person name="Oliver K."/>
            <person name="Price C."/>
            <person name="Quail M.A."/>
            <person name="Urushihara H."/>
            <person name="Hernandez J."/>
            <person name="Rabbinowitsch E."/>
            <person name="Steffen D."/>
            <person name="Sanders M."/>
            <person name="Ma J."/>
            <person name="Kohara Y."/>
            <person name="Sharp S."/>
            <person name="Simmonds M.N."/>
            <person name="Spiegler S."/>
            <person name="Tivey A."/>
            <person name="Sugano S."/>
            <person name="White B."/>
            <person name="Walker D."/>
            <person name="Woodward J.R."/>
            <person name="Winckler T."/>
            <person name="Tanaka Y."/>
            <person name="Shaulsky G."/>
            <person name="Schleicher M."/>
            <person name="Weinstock G.M."/>
            <person name="Rosenthal A."/>
            <person name="Cox E.C."/>
            <person name="Chisholm R.L."/>
            <person name="Gibbs R.A."/>
            <person name="Loomis W.F."/>
            <person name="Platzer M."/>
            <person name="Kay R.R."/>
            <person name="Williams J.G."/>
            <person name="Dear P.H."/>
            <person name="Noegel A.A."/>
            <person name="Barrell B.G."/>
            <person name="Kuspa A."/>
        </authorList>
    </citation>
    <scope>NUCLEOTIDE SEQUENCE [LARGE SCALE GENOMIC DNA]</scope>
    <source>
        <strain>AX4</strain>
    </source>
</reference>
<protein>
    <recommendedName>
        <fullName>Uncharacterized protein DDB_G0280315</fullName>
    </recommendedName>
</protein>
<sequence length="324" mass="37172">MNTNINVNGSNYHPYIRDYNNENNNNNNGRNNNTNNNNNGRYNNNNNNNNNNNNNNYNLNMNSTGGSGGSGSSYSYSRSVNRNGVNYNMNYNNNNGYNNNNFNNNYNGQNYNGNFNYNNNNNNLNYNYNNNNNHYIGSGTNNNNNNNNNNNNNNNNNNNNNNNFNYNYNRNFNNNNNRGYGNNRNININNNNNNRLLQNQNQNQQKYYFKSSFLEDPWKKTQHPLPDNCIVPHDGNSNVTVTVTPNSYSYSSSSSSIQPFNDENEITIDSDDENIDRTSNNNNNNNNNNNNSYNVNICRNNSNFNVNENNGGDNNNDNNNDNDS</sequence>
<dbReference type="EMBL" id="AAFI02000035">
    <property type="protein sequence ID" value="EAL67384.1"/>
    <property type="molecule type" value="Genomic_DNA"/>
</dbReference>
<dbReference type="RefSeq" id="XP_641370.1">
    <property type="nucleotide sequence ID" value="XM_636278.1"/>
</dbReference>
<dbReference type="PaxDb" id="44689-DDB0206510"/>
<dbReference type="EnsemblProtists" id="EAL67384">
    <property type="protein sequence ID" value="EAL67384"/>
    <property type="gene ID" value="DDB_G0280315"/>
</dbReference>
<dbReference type="GeneID" id="8622504"/>
<dbReference type="KEGG" id="ddi:DDB_G0280315"/>
<dbReference type="dictyBase" id="DDB_G0280315"/>
<dbReference type="VEuPathDB" id="AmoebaDB:DDB_G0280315"/>
<dbReference type="eggNOG" id="ENOG502RHWY">
    <property type="taxonomic scope" value="Eukaryota"/>
</dbReference>
<dbReference type="HOGENOM" id="CLU_859004_0_0_1"/>
<dbReference type="InParanoid" id="Q54VI5"/>
<dbReference type="OMA" id="PNGGYND"/>
<dbReference type="PRO" id="PR:Q54VI5"/>
<dbReference type="Proteomes" id="UP000002195">
    <property type="component" value="Chromosome 3"/>
</dbReference>
<proteinExistence type="predicted"/>
<accession>Q54VI5</accession>